<comment type="function">
    <text evidence="1">Catalyzes the formation of 6,7-dimethyl-8-ribityllumazine by condensation of 5-amino-6-(D-ribitylamino)uracil with 3,4-dihydroxy-2-butanone 4-phosphate. This is the penultimate step in the biosynthesis of riboflavin.</text>
</comment>
<comment type="catalytic activity">
    <reaction evidence="1">
        <text>(2S)-2-hydroxy-3-oxobutyl phosphate + 5-amino-6-(D-ribitylamino)uracil = 6,7-dimethyl-8-(1-D-ribityl)lumazine + phosphate + 2 H2O + H(+)</text>
        <dbReference type="Rhea" id="RHEA:26152"/>
        <dbReference type="ChEBI" id="CHEBI:15377"/>
        <dbReference type="ChEBI" id="CHEBI:15378"/>
        <dbReference type="ChEBI" id="CHEBI:15934"/>
        <dbReference type="ChEBI" id="CHEBI:43474"/>
        <dbReference type="ChEBI" id="CHEBI:58201"/>
        <dbReference type="ChEBI" id="CHEBI:58830"/>
        <dbReference type="EC" id="2.5.1.78"/>
    </reaction>
</comment>
<comment type="pathway">
    <text evidence="1">Cofactor biosynthesis; riboflavin biosynthesis; riboflavin from 2-hydroxy-3-oxobutyl phosphate and 5-amino-6-(D-ribitylamino)uracil: step 1/2.</text>
</comment>
<comment type="subunit">
    <text evidence="1">Forms an icosahedral capsid composed of 60 subunits, arranged as a dodecamer of pentamers.</text>
</comment>
<comment type="similarity">
    <text evidence="1">Belongs to the DMRL synthase family.</text>
</comment>
<evidence type="ECO:0000255" key="1">
    <source>
        <dbReference type="HAMAP-Rule" id="MF_00178"/>
    </source>
</evidence>
<reference key="1">
    <citation type="submission" date="2006-08" db="EMBL/GenBank/DDBJ databases">
        <title>Complete sequence of Alkalilimnicola ehrilichei MLHE-1.</title>
        <authorList>
            <person name="Copeland A."/>
            <person name="Lucas S."/>
            <person name="Lapidus A."/>
            <person name="Barry K."/>
            <person name="Detter J.C."/>
            <person name="Glavina del Rio T."/>
            <person name="Hammon N."/>
            <person name="Israni S."/>
            <person name="Dalin E."/>
            <person name="Tice H."/>
            <person name="Pitluck S."/>
            <person name="Sims D."/>
            <person name="Brettin T."/>
            <person name="Bruce D."/>
            <person name="Han C."/>
            <person name="Tapia R."/>
            <person name="Gilna P."/>
            <person name="Schmutz J."/>
            <person name="Larimer F."/>
            <person name="Land M."/>
            <person name="Hauser L."/>
            <person name="Kyrpides N."/>
            <person name="Mikhailova N."/>
            <person name="Oremland R.S."/>
            <person name="Hoeft S.E."/>
            <person name="Switzer-Blum J."/>
            <person name="Kulp T."/>
            <person name="King G."/>
            <person name="Tabita R."/>
            <person name="Witte B."/>
            <person name="Santini J.M."/>
            <person name="Basu P."/>
            <person name="Hollibaugh J.T."/>
            <person name="Xie G."/>
            <person name="Stolz J.F."/>
            <person name="Richardson P."/>
        </authorList>
    </citation>
    <scope>NUCLEOTIDE SEQUENCE [LARGE SCALE GENOMIC DNA]</scope>
    <source>
        <strain>ATCC BAA-1101 / DSM 17681 / MLHE-1</strain>
    </source>
</reference>
<accession>Q0ABQ4</accession>
<keyword id="KW-1185">Reference proteome</keyword>
<keyword id="KW-0686">Riboflavin biosynthesis</keyword>
<keyword id="KW-0808">Transferase</keyword>
<feature type="chain" id="PRO_1000058361" description="6,7-dimethyl-8-ribityllumazine synthase">
    <location>
        <begin position="1"/>
        <end position="156"/>
    </location>
</feature>
<feature type="active site" description="Proton donor" evidence="1">
    <location>
        <position position="89"/>
    </location>
</feature>
<feature type="binding site" evidence="1">
    <location>
        <position position="23"/>
    </location>
    <ligand>
        <name>5-amino-6-(D-ribitylamino)uracil</name>
        <dbReference type="ChEBI" id="CHEBI:15934"/>
    </ligand>
</feature>
<feature type="binding site" evidence="1">
    <location>
        <begin position="57"/>
        <end position="59"/>
    </location>
    <ligand>
        <name>5-amino-6-(D-ribitylamino)uracil</name>
        <dbReference type="ChEBI" id="CHEBI:15934"/>
    </ligand>
</feature>
<feature type="binding site" evidence="1">
    <location>
        <begin position="81"/>
        <end position="83"/>
    </location>
    <ligand>
        <name>5-amino-6-(D-ribitylamino)uracil</name>
        <dbReference type="ChEBI" id="CHEBI:15934"/>
    </ligand>
</feature>
<feature type="binding site" evidence="1">
    <location>
        <begin position="86"/>
        <end position="87"/>
    </location>
    <ligand>
        <name>(2S)-2-hydroxy-3-oxobutyl phosphate</name>
        <dbReference type="ChEBI" id="CHEBI:58830"/>
    </ligand>
</feature>
<feature type="binding site" evidence="1">
    <location>
        <position position="114"/>
    </location>
    <ligand>
        <name>5-amino-6-(D-ribitylamino)uracil</name>
        <dbReference type="ChEBI" id="CHEBI:15934"/>
    </ligand>
</feature>
<feature type="binding site" evidence="1">
    <location>
        <position position="128"/>
    </location>
    <ligand>
        <name>(2S)-2-hydroxy-3-oxobutyl phosphate</name>
        <dbReference type="ChEBI" id="CHEBI:58830"/>
    </ligand>
</feature>
<proteinExistence type="inferred from homology"/>
<organism>
    <name type="scientific">Alkalilimnicola ehrlichii (strain ATCC BAA-1101 / DSM 17681 / MLHE-1)</name>
    <dbReference type="NCBI Taxonomy" id="187272"/>
    <lineage>
        <taxon>Bacteria</taxon>
        <taxon>Pseudomonadati</taxon>
        <taxon>Pseudomonadota</taxon>
        <taxon>Gammaproteobacteria</taxon>
        <taxon>Chromatiales</taxon>
        <taxon>Ectothiorhodospiraceae</taxon>
        <taxon>Alkalilimnicola</taxon>
    </lineage>
</organism>
<name>RISB_ALKEH</name>
<gene>
    <name evidence="1" type="primary">ribH</name>
    <name type="ordered locus">Mlg_0378</name>
</gene>
<sequence length="156" mass="16380">MNIIEGDFQNPGSARFAIVAARFNDFVVGHLVEGAADALRRHGVPDDHIDLIRVPGSFELPLAVQQTAEAGRYSAVIALGAVIRGGTPHFEYVASECTKGVAATMMDTGLPIAFGVLTVDTIEQAIERSGTKAGNKGAEAALSALEMVSLMKKLAE</sequence>
<dbReference type="EC" id="2.5.1.78" evidence="1"/>
<dbReference type="EMBL" id="CP000453">
    <property type="protein sequence ID" value="ABI55733.1"/>
    <property type="molecule type" value="Genomic_DNA"/>
</dbReference>
<dbReference type="RefSeq" id="WP_011628129.1">
    <property type="nucleotide sequence ID" value="NC_008340.1"/>
</dbReference>
<dbReference type="SMR" id="Q0ABQ4"/>
<dbReference type="KEGG" id="aeh:Mlg_0378"/>
<dbReference type="eggNOG" id="COG0054">
    <property type="taxonomic scope" value="Bacteria"/>
</dbReference>
<dbReference type="HOGENOM" id="CLU_089358_1_1_6"/>
<dbReference type="OrthoDB" id="9809709at2"/>
<dbReference type="UniPathway" id="UPA00275">
    <property type="reaction ID" value="UER00404"/>
</dbReference>
<dbReference type="Proteomes" id="UP000001962">
    <property type="component" value="Chromosome"/>
</dbReference>
<dbReference type="GO" id="GO:0005829">
    <property type="term" value="C:cytosol"/>
    <property type="evidence" value="ECO:0007669"/>
    <property type="project" value="TreeGrafter"/>
</dbReference>
<dbReference type="GO" id="GO:0009349">
    <property type="term" value="C:riboflavin synthase complex"/>
    <property type="evidence" value="ECO:0007669"/>
    <property type="project" value="InterPro"/>
</dbReference>
<dbReference type="GO" id="GO:0000906">
    <property type="term" value="F:6,7-dimethyl-8-ribityllumazine synthase activity"/>
    <property type="evidence" value="ECO:0007669"/>
    <property type="project" value="UniProtKB-UniRule"/>
</dbReference>
<dbReference type="GO" id="GO:0009231">
    <property type="term" value="P:riboflavin biosynthetic process"/>
    <property type="evidence" value="ECO:0007669"/>
    <property type="project" value="UniProtKB-UniRule"/>
</dbReference>
<dbReference type="CDD" id="cd09209">
    <property type="entry name" value="Lumazine_synthase-I"/>
    <property type="match status" value="1"/>
</dbReference>
<dbReference type="FunFam" id="3.40.50.960:FF:000001">
    <property type="entry name" value="6,7-dimethyl-8-ribityllumazine synthase"/>
    <property type="match status" value="1"/>
</dbReference>
<dbReference type="Gene3D" id="3.40.50.960">
    <property type="entry name" value="Lumazine/riboflavin synthase"/>
    <property type="match status" value="1"/>
</dbReference>
<dbReference type="HAMAP" id="MF_00178">
    <property type="entry name" value="Lumazine_synth"/>
    <property type="match status" value="1"/>
</dbReference>
<dbReference type="InterPro" id="IPR034964">
    <property type="entry name" value="LS"/>
</dbReference>
<dbReference type="InterPro" id="IPR002180">
    <property type="entry name" value="LS/RS"/>
</dbReference>
<dbReference type="InterPro" id="IPR036467">
    <property type="entry name" value="LS/RS_sf"/>
</dbReference>
<dbReference type="NCBIfam" id="TIGR00114">
    <property type="entry name" value="lumazine-synth"/>
    <property type="match status" value="1"/>
</dbReference>
<dbReference type="NCBIfam" id="NF000812">
    <property type="entry name" value="PRK00061.1-4"/>
    <property type="match status" value="1"/>
</dbReference>
<dbReference type="PANTHER" id="PTHR21058:SF0">
    <property type="entry name" value="6,7-DIMETHYL-8-RIBITYLLUMAZINE SYNTHASE"/>
    <property type="match status" value="1"/>
</dbReference>
<dbReference type="PANTHER" id="PTHR21058">
    <property type="entry name" value="6,7-DIMETHYL-8-RIBITYLLUMAZINE SYNTHASE DMRL SYNTHASE LUMAZINE SYNTHASE"/>
    <property type="match status" value="1"/>
</dbReference>
<dbReference type="Pfam" id="PF00885">
    <property type="entry name" value="DMRL_synthase"/>
    <property type="match status" value="1"/>
</dbReference>
<dbReference type="SUPFAM" id="SSF52121">
    <property type="entry name" value="Lumazine synthase"/>
    <property type="match status" value="1"/>
</dbReference>
<protein>
    <recommendedName>
        <fullName evidence="1">6,7-dimethyl-8-ribityllumazine synthase</fullName>
        <shortName evidence="1">DMRL synthase</shortName>
        <shortName evidence="1">LS</shortName>
        <shortName evidence="1">Lumazine synthase</shortName>
        <ecNumber evidence="1">2.5.1.78</ecNumber>
    </recommendedName>
</protein>